<sequence length="452" mass="47437">MLGPFEVLETIDMIQKENLDIRTITMGISLRDCCHPDIDISCKKIYDKITRYAEKLVVTGENIEREFGIPIINKRISVTPIALIAESSESDEYVKFAEAMDKAAQTVGVDFIGGFSSLVHKGYTVGDKRLIQSIPEALSRTKLVCSSVNVASTKAGINMDAVAEMGRIIKKCAELTADSGALACAKLVVFANAVEDNPFMAGAFHGIGEPECVINVGVSGPGVVKCALEKVKGADFGTVSETIKKTAFKITRMGQLVAQEASRRLNVPFGIVDLSLAPTPAIGDSVAYILEEMGLEKCGTHGTTAALALLNDAVKKGGVMASSYVGGLSGAFIPVSEDAGMIEAAMSGALSLEKLEAMTCVCSVGLDMIVVPGDTSAETISAIIADEAAIGVVNTKTTAVRIIPAPGKKVGDKVEFGGLLGSGPVMKVNPFSSSEFIKRGGRIPAPMHSLKN</sequence>
<proteinExistence type="inferred from homology"/>
<name>Y1722_RUMCH</name>
<feature type="chain" id="PRO_1000164864" description="UPF0210 protein Ccel_1722">
    <location>
        <begin position="1"/>
        <end position="452"/>
    </location>
</feature>
<comment type="subunit">
    <text evidence="1">Homodimer.</text>
</comment>
<comment type="similarity">
    <text evidence="1">Belongs to the UPF0210 family.</text>
</comment>
<protein>
    <recommendedName>
        <fullName evidence="1">UPF0210 protein Ccel_1722</fullName>
    </recommendedName>
</protein>
<organism>
    <name type="scientific">Ruminiclostridium cellulolyticum (strain ATCC 35319 / DSM 5812 / JCM 6584 / H10)</name>
    <name type="common">Clostridium cellulolyticum</name>
    <dbReference type="NCBI Taxonomy" id="394503"/>
    <lineage>
        <taxon>Bacteria</taxon>
        <taxon>Bacillati</taxon>
        <taxon>Bacillota</taxon>
        <taxon>Clostridia</taxon>
        <taxon>Eubacteriales</taxon>
        <taxon>Oscillospiraceae</taxon>
        <taxon>Ruminiclostridium</taxon>
    </lineage>
</organism>
<gene>
    <name type="ordered locus">Ccel_1722</name>
</gene>
<accession>B8I2T0</accession>
<dbReference type="EMBL" id="CP001348">
    <property type="protein sequence ID" value="ACL76073.1"/>
    <property type="molecule type" value="Genomic_DNA"/>
</dbReference>
<dbReference type="RefSeq" id="WP_015925188.1">
    <property type="nucleotide sequence ID" value="NC_011898.1"/>
</dbReference>
<dbReference type="SMR" id="B8I2T0"/>
<dbReference type="STRING" id="394503.Ccel_1722"/>
<dbReference type="KEGG" id="cce:Ccel_1722"/>
<dbReference type="eggNOG" id="COG2848">
    <property type="taxonomic scope" value="Bacteria"/>
</dbReference>
<dbReference type="HOGENOM" id="CLU_048704_0_0_9"/>
<dbReference type="OrthoDB" id="9763001at2"/>
<dbReference type="Proteomes" id="UP000001349">
    <property type="component" value="Chromosome"/>
</dbReference>
<dbReference type="CDD" id="cd08025">
    <property type="entry name" value="RNR_PFL_like_DUF711"/>
    <property type="match status" value="1"/>
</dbReference>
<dbReference type="Gene3D" id="3.20.70.20">
    <property type="match status" value="1"/>
</dbReference>
<dbReference type="HAMAP" id="MF_01221">
    <property type="entry name" value="UPF0210"/>
    <property type="match status" value="1"/>
</dbReference>
<dbReference type="InterPro" id="IPR007841">
    <property type="entry name" value="UPF0210"/>
</dbReference>
<dbReference type="NCBIfam" id="NF003700">
    <property type="entry name" value="PRK05313.1"/>
    <property type="match status" value="1"/>
</dbReference>
<dbReference type="PANTHER" id="PTHR37560:SF1">
    <property type="entry name" value="UPF0210 PROTEIN MJ1665"/>
    <property type="match status" value="1"/>
</dbReference>
<dbReference type="PANTHER" id="PTHR37560">
    <property type="entry name" value="UPF0210 PROTEIN SPR0218"/>
    <property type="match status" value="1"/>
</dbReference>
<dbReference type="Pfam" id="PF05167">
    <property type="entry name" value="DUF711"/>
    <property type="match status" value="1"/>
</dbReference>
<dbReference type="SUPFAM" id="SSF51998">
    <property type="entry name" value="PFL-like glycyl radical enzymes"/>
    <property type="match status" value="1"/>
</dbReference>
<reference key="1">
    <citation type="submission" date="2009-01" db="EMBL/GenBank/DDBJ databases">
        <title>Complete sequence of Clostridium cellulolyticum H10.</title>
        <authorList>
            <consortium name="US DOE Joint Genome Institute"/>
            <person name="Lucas S."/>
            <person name="Copeland A."/>
            <person name="Lapidus A."/>
            <person name="Glavina del Rio T."/>
            <person name="Dalin E."/>
            <person name="Tice H."/>
            <person name="Bruce D."/>
            <person name="Goodwin L."/>
            <person name="Pitluck S."/>
            <person name="Chertkov O."/>
            <person name="Saunders E."/>
            <person name="Brettin T."/>
            <person name="Detter J.C."/>
            <person name="Han C."/>
            <person name="Larimer F."/>
            <person name="Land M."/>
            <person name="Hauser L."/>
            <person name="Kyrpides N."/>
            <person name="Ivanova N."/>
            <person name="Zhou J."/>
            <person name="Richardson P."/>
        </authorList>
    </citation>
    <scope>NUCLEOTIDE SEQUENCE [LARGE SCALE GENOMIC DNA]</scope>
    <source>
        <strain>ATCC 35319 / DSM 5812 / JCM 6584 / H10</strain>
    </source>
</reference>
<evidence type="ECO:0000255" key="1">
    <source>
        <dbReference type="HAMAP-Rule" id="MF_01221"/>
    </source>
</evidence>
<keyword id="KW-1185">Reference proteome</keyword>